<name>MINC_BACAH</name>
<proteinExistence type="inferred from homology"/>
<organism>
    <name type="scientific">Bacillus thuringiensis (strain Al Hakam)</name>
    <dbReference type="NCBI Taxonomy" id="412694"/>
    <lineage>
        <taxon>Bacteria</taxon>
        <taxon>Bacillati</taxon>
        <taxon>Bacillota</taxon>
        <taxon>Bacilli</taxon>
        <taxon>Bacillales</taxon>
        <taxon>Bacillaceae</taxon>
        <taxon>Bacillus</taxon>
        <taxon>Bacillus cereus group</taxon>
    </lineage>
</organism>
<keyword id="KW-0131">Cell cycle</keyword>
<keyword id="KW-0132">Cell division</keyword>
<keyword id="KW-0717">Septation</keyword>
<feature type="chain" id="PRO_1000047800" description="Probable septum site-determining protein MinC">
    <location>
        <begin position="1"/>
        <end position="228"/>
    </location>
</feature>
<dbReference type="EMBL" id="CP000485">
    <property type="protein sequence ID" value="ABK87249.1"/>
    <property type="molecule type" value="Genomic_DNA"/>
</dbReference>
<dbReference type="RefSeq" id="WP_000391517.1">
    <property type="nucleotide sequence ID" value="NC_008600.1"/>
</dbReference>
<dbReference type="SMR" id="A0RJ56"/>
<dbReference type="GeneID" id="93006651"/>
<dbReference type="KEGG" id="btl:BALH_4032"/>
<dbReference type="HOGENOM" id="CLU_048711_1_1_9"/>
<dbReference type="GO" id="GO:0000902">
    <property type="term" value="P:cell morphogenesis"/>
    <property type="evidence" value="ECO:0007669"/>
    <property type="project" value="InterPro"/>
</dbReference>
<dbReference type="GO" id="GO:0000917">
    <property type="term" value="P:division septum assembly"/>
    <property type="evidence" value="ECO:0007669"/>
    <property type="project" value="UniProtKB-KW"/>
</dbReference>
<dbReference type="GO" id="GO:1901891">
    <property type="term" value="P:regulation of cell septum assembly"/>
    <property type="evidence" value="ECO:0007669"/>
    <property type="project" value="InterPro"/>
</dbReference>
<dbReference type="FunFam" id="2.160.20.70:FF:000003">
    <property type="entry name" value="Probable septum site-determining protein MinC"/>
    <property type="match status" value="1"/>
</dbReference>
<dbReference type="FunFam" id="3.30.160.540:FF:000001">
    <property type="entry name" value="Probable septum site-determining protein MinC"/>
    <property type="match status" value="1"/>
</dbReference>
<dbReference type="Gene3D" id="2.160.20.70">
    <property type="match status" value="1"/>
</dbReference>
<dbReference type="Gene3D" id="3.30.160.540">
    <property type="match status" value="1"/>
</dbReference>
<dbReference type="HAMAP" id="MF_00267">
    <property type="entry name" value="MinC"/>
    <property type="match status" value="1"/>
</dbReference>
<dbReference type="InterPro" id="IPR016098">
    <property type="entry name" value="CAP/MinC_C"/>
</dbReference>
<dbReference type="InterPro" id="IPR013033">
    <property type="entry name" value="MinC"/>
</dbReference>
<dbReference type="InterPro" id="IPR036145">
    <property type="entry name" value="MinC_C_sf"/>
</dbReference>
<dbReference type="InterPro" id="IPR055219">
    <property type="entry name" value="MinC_N_1"/>
</dbReference>
<dbReference type="InterPro" id="IPR005526">
    <property type="entry name" value="Septum_form_inhib_MinC_C"/>
</dbReference>
<dbReference type="NCBIfam" id="TIGR01222">
    <property type="entry name" value="minC"/>
    <property type="match status" value="1"/>
</dbReference>
<dbReference type="PANTHER" id="PTHR34108">
    <property type="entry name" value="SEPTUM SITE-DETERMINING PROTEIN MINC"/>
    <property type="match status" value="1"/>
</dbReference>
<dbReference type="PANTHER" id="PTHR34108:SF1">
    <property type="entry name" value="SEPTUM SITE-DETERMINING PROTEIN MINC"/>
    <property type="match status" value="1"/>
</dbReference>
<dbReference type="Pfam" id="PF03775">
    <property type="entry name" value="MinC_C"/>
    <property type="match status" value="1"/>
</dbReference>
<dbReference type="Pfam" id="PF22642">
    <property type="entry name" value="MinC_N_1"/>
    <property type="match status" value="1"/>
</dbReference>
<dbReference type="SUPFAM" id="SSF63848">
    <property type="entry name" value="Cell-division inhibitor MinC, C-terminal domain"/>
    <property type="match status" value="1"/>
</dbReference>
<comment type="function">
    <text evidence="1">Cell division inhibitor that blocks the formation of polar Z ring septums. Rapidly oscillates between the poles of the cell to destabilize FtsZ filaments that have formed before they mature into polar Z rings. Prevents FtsZ polymerization.</text>
</comment>
<comment type="subunit">
    <text evidence="1">Interacts with MinD and FtsZ.</text>
</comment>
<comment type="similarity">
    <text evidence="1">Belongs to the MinC family.</text>
</comment>
<reference key="1">
    <citation type="journal article" date="2007" name="J. Bacteriol.">
        <title>The complete genome sequence of Bacillus thuringiensis Al Hakam.</title>
        <authorList>
            <person name="Challacombe J.F."/>
            <person name="Altherr M.R."/>
            <person name="Xie G."/>
            <person name="Bhotika S.S."/>
            <person name="Brown N."/>
            <person name="Bruce D."/>
            <person name="Campbell C.S."/>
            <person name="Campbell M.L."/>
            <person name="Chen J."/>
            <person name="Chertkov O."/>
            <person name="Cleland C."/>
            <person name="Dimitrijevic M."/>
            <person name="Doggett N.A."/>
            <person name="Fawcett J.J."/>
            <person name="Glavina T."/>
            <person name="Goodwin L.A."/>
            <person name="Green L.D."/>
            <person name="Han C.S."/>
            <person name="Hill K.K."/>
            <person name="Hitchcock P."/>
            <person name="Jackson P.J."/>
            <person name="Keim P."/>
            <person name="Kewalramani A.R."/>
            <person name="Longmire J."/>
            <person name="Lucas S."/>
            <person name="Malfatti S."/>
            <person name="Martinez D."/>
            <person name="McMurry K."/>
            <person name="Meincke L.J."/>
            <person name="Misra M."/>
            <person name="Moseman B.L."/>
            <person name="Mundt M."/>
            <person name="Munk A.C."/>
            <person name="Okinaka R.T."/>
            <person name="Parson-Quintana B."/>
            <person name="Reilly L.P."/>
            <person name="Richardson P."/>
            <person name="Robinson D.L."/>
            <person name="Saunders E."/>
            <person name="Tapia R."/>
            <person name="Tesmer J.G."/>
            <person name="Thayer N."/>
            <person name="Thompson L.S."/>
            <person name="Tice H."/>
            <person name="Ticknor L.O."/>
            <person name="Wills P.L."/>
            <person name="Gilna P."/>
            <person name="Brettin T.S."/>
        </authorList>
    </citation>
    <scope>NUCLEOTIDE SEQUENCE [LARGE SCALE GENOMIC DNA]</scope>
    <source>
        <strain>Al Hakam</strain>
    </source>
</reference>
<gene>
    <name evidence="1" type="primary">minC</name>
    <name type="ordered locus">BALH_4032</name>
</gene>
<evidence type="ECO:0000255" key="1">
    <source>
        <dbReference type="HAMAP-Rule" id="MF_00267"/>
    </source>
</evidence>
<accession>A0RJ56</accession>
<sequence length="228" mass="25229">MEEKKQQNVTIKGTKDGITLHLDDCCSFSELLKELDEKLSTHYYDGDGRSLIEVHVKVGNRYLTEVQQEEIRTLIRNKKNLVVDSIESDVITKEEAIAWKEETEIVPISKIVRSGQVLHVKGNLLLIGDVNPGGTVIAGGNIFVVGSLRGIAHAGYYGDSDAVIAASVMNPMQLRISDVAMRAPEEKEDGAEAAECAYINENNHIVVDRLQLLTHLRPNLTKLERGIV</sequence>
<protein>
    <recommendedName>
        <fullName evidence="1">Probable septum site-determining protein MinC</fullName>
    </recommendedName>
</protein>